<organism>
    <name type="scientific">Potato virus X (strain HB)</name>
    <name type="common">PVX</name>
    <dbReference type="NCBI Taxonomy" id="73488"/>
    <lineage>
        <taxon>Viruses</taxon>
        <taxon>Riboviria</taxon>
        <taxon>Orthornavirae</taxon>
        <taxon>Kitrinoviricota</taxon>
        <taxon>Alsuviricetes</taxon>
        <taxon>Tymovirales</taxon>
        <taxon>Alphaflexiviridae</taxon>
        <taxon>Potexvirus</taxon>
        <taxon>Potato virus X</taxon>
    </lineage>
</organism>
<proteinExistence type="inferred from homology"/>
<gene>
    <name type="ORF">ORF3</name>
</gene>
<feature type="chain" id="PRO_0000222590" description="Movement protein TGB2">
    <location>
        <begin position="1"/>
        <end position="115"/>
    </location>
</feature>
<feature type="topological domain" description="Cytoplasmic" evidence="1">
    <location>
        <begin position="1"/>
        <end position="13"/>
    </location>
</feature>
<feature type="transmembrane region" description="Helical" evidence="2">
    <location>
        <begin position="14"/>
        <end position="34"/>
    </location>
</feature>
<feature type="topological domain" description="Lumenal" evidence="1">
    <location>
        <begin position="35"/>
        <end position="74"/>
    </location>
</feature>
<feature type="transmembrane region" description="Helical" evidence="2">
    <location>
        <begin position="75"/>
        <end position="95"/>
    </location>
</feature>
<feature type="topological domain" description="Cytoplasmic" evidence="1">
    <location>
        <begin position="96"/>
        <end position="115"/>
    </location>
</feature>
<evidence type="ECO:0000250" key="1"/>
<evidence type="ECO:0000255" key="2"/>
<evidence type="ECO:0000305" key="3"/>
<name>TGB2_PVXHB</name>
<protein>
    <recommendedName>
        <fullName>Movement protein TGB2</fullName>
    </recommendedName>
    <alternativeName>
        <fullName>12 kDa protein</fullName>
    </alternativeName>
    <alternativeName>
        <fullName>Triple gene block 2 protein</fullName>
        <shortName>TGBp2</shortName>
    </alternativeName>
</protein>
<organismHost>
    <name type="scientific">Brassica campestris</name>
    <name type="common">Field mustard</name>
    <dbReference type="NCBI Taxonomy" id="3711"/>
</organismHost>
<organismHost>
    <name type="scientific">Solanum tuberosum</name>
    <name type="common">Potato</name>
    <dbReference type="NCBI Taxonomy" id="4113"/>
</organismHost>
<dbReference type="EMBL" id="X72214">
    <property type="protein sequence ID" value="CAA51014.1"/>
    <property type="molecule type" value="Genomic_RNA"/>
</dbReference>
<dbReference type="PIR" id="JQ2296">
    <property type="entry name" value="JQ2296"/>
</dbReference>
<dbReference type="Proteomes" id="UP000006842">
    <property type="component" value="Genome"/>
</dbReference>
<dbReference type="GO" id="GO:0044167">
    <property type="term" value="C:host cell endoplasmic reticulum membrane"/>
    <property type="evidence" value="ECO:0007669"/>
    <property type="project" value="UniProtKB-SubCell"/>
</dbReference>
<dbReference type="GO" id="GO:0016020">
    <property type="term" value="C:membrane"/>
    <property type="evidence" value="ECO:0007669"/>
    <property type="project" value="UniProtKB-KW"/>
</dbReference>
<dbReference type="GO" id="GO:0046740">
    <property type="term" value="P:transport of virus in host, cell to cell"/>
    <property type="evidence" value="ECO:0007669"/>
    <property type="project" value="UniProtKB-KW"/>
</dbReference>
<dbReference type="InterPro" id="IPR001896">
    <property type="entry name" value="Plant_vir_prot"/>
</dbReference>
<dbReference type="Pfam" id="PF01307">
    <property type="entry name" value="Plant_vir_prot"/>
    <property type="match status" value="1"/>
</dbReference>
<accession>Q07633</accession>
<comment type="function">
    <text evidence="1">Plays a role in viral cell-to-cell propagation, by facilitating genome transport to neighboring plant cells through plasmosdesmata,.</text>
</comment>
<comment type="subcellular location">
    <subcellularLocation>
        <location evidence="1">Host endoplasmic reticulum membrane</location>
    </subcellularLocation>
</comment>
<comment type="miscellaneous">
    <text>TGBp1, TGBp2 and TGBp3 seem to act together for cell-to-cell propagation. TGBp1 is the main movement protein that physically cross the plasmodesma with the viral genome. TGBp2 and TGBp3 would facilitate TGBp1 function.</text>
</comment>
<comment type="similarity">
    <text evidence="3">Belongs to the Tymovirales TGBp2 protein family.</text>
</comment>
<sequence>MSAQGHRLTAPVNSEKVYIVLGLSFALISITFLLSRNNLPHVGDNIHSLPHGDAYRDGTKAILYNSPNFGSRTSLNNSKNAAFAAVLLLSLLIYGSRCLSQRNHLCACGNNHSSN</sequence>
<reference key="1">
    <citation type="journal article" date="1993" name="J. Gen. Virol.">
        <title>RNA sequence of potato virus X strain HB.</title>
        <authorList>
            <person name="Querci M."/>
            <person name="van der Vlugt R."/>
            <person name="Goldbach R."/>
            <person name="Salazar L.F."/>
        </authorList>
    </citation>
    <scope>NUCLEOTIDE SEQUENCE [GENOMIC RNA]</scope>
</reference>
<reference key="2">
    <citation type="journal article" date="2005" name="Mol. Plant Microbe Interact.">
        <title>A new cell-to-cell transport model for Potexviruses.</title>
        <authorList>
            <person name="Verchot-Lubicz J."/>
        </authorList>
    </citation>
    <scope>REVIEW</scope>
</reference>
<keyword id="KW-1038">Host endoplasmic reticulum</keyword>
<keyword id="KW-1043">Host membrane</keyword>
<keyword id="KW-0472">Membrane</keyword>
<keyword id="KW-0812">Transmembrane</keyword>
<keyword id="KW-1133">Transmembrane helix</keyword>
<keyword id="KW-0813">Transport</keyword>
<keyword id="KW-0916">Viral movement protein</keyword>